<keyword id="KW-0175">Coiled coil</keyword>
<keyword id="KW-0479">Metal-binding</keyword>
<keyword id="KW-0539">Nucleus</keyword>
<keyword id="KW-1185">Reference proteome</keyword>
<keyword id="KW-0804">Transcription</keyword>
<keyword id="KW-0805">Transcription regulation</keyword>
<keyword id="KW-0862">Zinc</keyword>
<keyword id="KW-0863">Zinc-finger</keyword>
<gene>
    <name type="primary">TFB3</name>
    <name type="ordered locus">DEHA2E15378g</name>
</gene>
<evidence type="ECO:0000250" key="1"/>
<evidence type="ECO:0000255" key="2"/>
<evidence type="ECO:0000255" key="3">
    <source>
        <dbReference type="PROSITE-ProRule" id="PRU00175"/>
    </source>
</evidence>
<accession>Q6BP96</accession>
<sequence length="340" mass="39717">MVVEDDRSKDMCPICKTDKYLSPNMNFLINPECYHKICESCVDRIFSLGPAPCPYPKCGKILRKNKFKKQIFDDLGIEKEIDIRKRVSGIYNKTEEDFDDLKDYNKYLESVENIIFNLNNGIDIEETESNLVKYENEHKIEILEKNMRESQKNSDLAKYQEAMARLKQEKVKIQKQMEIEDLEFQKQQKQELLDKLSTAQSANSEELITQSNNNILKRSSLRKRQLQQLTSQLDQQFQSSNPFSKQAKAIEDEDNRTPFTPFKGDRELHKNYTFLPDIHKNDAMDVDEDAGLNTYHAPYLSKLAKDKQYLGAGWRLNNAFERALDEAFTGLCCFIDKEKT</sequence>
<proteinExistence type="inferred from homology"/>
<comment type="function">
    <text evidence="1">Acts as a component of the general transcription and DNA repair factor IIH (TFIIH or factor B), which is essential for both basal and activated transcription, and is involved in nucleotide excision repair (NER) of damaged DNA. TFIIH as CTD kinase activity and DNA-dependent ATPase activity, and is essential for polymerase II transcription (By similarity).</text>
</comment>
<comment type="subcellular location">
    <subcellularLocation>
        <location evidence="1">Nucleus</location>
    </subcellularLocation>
</comment>
<name>TFB3_DEBHA</name>
<reference key="1">
    <citation type="journal article" date="2004" name="Nature">
        <title>Genome evolution in yeasts.</title>
        <authorList>
            <person name="Dujon B."/>
            <person name="Sherman D."/>
            <person name="Fischer G."/>
            <person name="Durrens P."/>
            <person name="Casaregola S."/>
            <person name="Lafontaine I."/>
            <person name="de Montigny J."/>
            <person name="Marck C."/>
            <person name="Neuveglise C."/>
            <person name="Talla E."/>
            <person name="Goffard N."/>
            <person name="Frangeul L."/>
            <person name="Aigle M."/>
            <person name="Anthouard V."/>
            <person name="Babour A."/>
            <person name="Barbe V."/>
            <person name="Barnay S."/>
            <person name="Blanchin S."/>
            <person name="Beckerich J.-M."/>
            <person name="Beyne E."/>
            <person name="Bleykasten C."/>
            <person name="Boisrame A."/>
            <person name="Boyer J."/>
            <person name="Cattolico L."/>
            <person name="Confanioleri F."/>
            <person name="de Daruvar A."/>
            <person name="Despons L."/>
            <person name="Fabre E."/>
            <person name="Fairhead C."/>
            <person name="Ferry-Dumazet H."/>
            <person name="Groppi A."/>
            <person name="Hantraye F."/>
            <person name="Hennequin C."/>
            <person name="Jauniaux N."/>
            <person name="Joyet P."/>
            <person name="Kachouri R."/>
            <person name="Kerrest A."/>
            <person name="Koszul R."/>
            <person name="Lemaire M."/>
            <person name="Lesur I."/>
            <person name="Ma L."/>
            <person name="Muller H."/>
            <person name="Nicaud J.-M."/>
            <person name="Nikolski M."/>
            <person name="Oztas S."/>
            <person name="Ozier-Kalogeropoulos O."/>
            <person name="Pellenz S."/>
            <person name="Potier S."/>
            <person name="Richard G.-F."/>
            <person name="Straub M.-L."/>
            <person name="Suleau A."/>
            <person name="Swennen D."/>
            <person name="Tekaia F."/>
            <person name="Wesolowski-Louvel M."/>
            <person name="Westhof E."/>
            <person name="Wirth B."/>
            <person name="Zeniou-Meyer M."/>
            <person name="Zivanovic Y."/>
            <person name="Bolotin-Fukuhara M."/>
            <person name="Thierry A."/>
            <person name="Bouchier C."/>
            <person name="Caudron B."/>
            <person name="Scarpelli C."/>
            <person name="Gaillardin C."/>
            <person name="Weissenbach J."/>
            <person name="Wincker P."/>
            <person name="Souciet J.-L."/>
        </authorList>
    </citation>
    <scope>NUCLEOTIDE SEQUENCE [LARGE SCALE GENOMIC DNA]</scope>
    <source>
        <strain>ATCC 36239 / CBS 767 / BCRC 21394 / JCM 1990 / NBRC 0083 / IGC 2968</strain>
    </source>
</reference>
<feature type="chain" id="PRO_0000055938" description="RNA polymerase II transcription factor B subunit 3">
    <location>
        <begin position="1"/>
        <end position="340"/>
    </location>
</feature>
<feature type="zinc finger region" description="RING-type" evidence="3">
    <location>
        <begin position="12"/>
        <end position="57"/>
    </location>
</feature>
<feature type="coiled-coil region" evidence="2">
    <location>
        <begin position="124"/>
        <end position="206"/>
    </location>
</feature>
<dbReference type="EMBL" id="CR382137">
    <property type="protein sequence ID" value="CAG88223.2"/>
    <property type="molecule type" value="Genomic_DNA"/>
</dbReference>
<dbReference type="RefSeq" id="XP_459974.2">
    <property type="nucleotide sequence ID" value="XM_459974.2"/>
</dbReference>
<dbReference type="SMR" id="Q6BP96"/>
<dbReference type="FunCoup" id="Q6BP96">
    <property type="interactions" value="556"/>
</dbReference>
<dbReference type="STRING" id="284592.Q6BP96"/>
<dbReference type="GeneID" id="2902807"/>
<dbReference type="KEGG" id="dha:DEHA2E15378g"/>
<dbReference type="VEuPathDB" id="FungiDB:DEHA2E15378g"/>
<dbReference type="eggNOG" id="KOG3800">
    <property type="taxonomic scope" value="Eukaryota"/>
</dbReference>
<dbReference type="HOGENOM" id="CLU_048466_1_1_1"/>
<dbReference type="InParanoid" id="Q6BP96"/>
<dbReference type="OMA" id="PNKRDYY"/>
<dbReference type="OrthoDB" id="5963at2759"/>
<dbReference type="Proteomes" id="UP000000599">
    <property type="component" value="Chromosome E"/>
</dbReference>
<dbReference type="GO" id="GO:0070985">
    <property type="term" value="C:transcription factor TFIIK complex"/>
    <property type="evidence" value="ECO:0007669"/>
    <property type="project" value="EnsemblFungi"/>
</dbReference>
<dbReference type="GO" id="GO:0061575">
    <property type="term" value="F:cyclin-dependent protein serine/threonine kinase activator activity"/>
    <property type="evidence" value="ECO:0007669"/>
    <property type="project" value="EnsemblFungi"/>
</dbReference>
<dbReference type="GO" id="GO:0008270">
    <property type="term" value="F:zinc ion binding"/>
    <property type="evidence" value="ECO:0007669"/>
    <property type="project" value="UniProtKB-KW"/>
</dbReference>
<dbReference type="GO" id="GO:0006289">
    <property type="term" value="P:nucleotide-excision repair"/>
    <property type="evidence" value="ECO:0007669"/>
    <property type="project" value="InterPro"/>
</dbReference>
<dbReference type="GO" id="GO:0006357">
    <property type="term" value="P:regulation of transcription by RNA polymerase II"/>
    <property type="evidence" value="ECO:0007669"/>
    <property type="project" value="TreeGrafter"/>
</dbReference>
<dbReference type="CDD" id="cd16573">
    <property type="entry name" value="RING-HC_TFB3-like"/>
    <property type="match status" value="1"/>
</dbReference>
<dbReference type="FunFam" id="3.30.40.10:FF:000037">
    <property type="entry name" value="Cdk-activating kinase assembly factor MAT1, centre"/>
    <property type="match status" value="1"/>
</dbReference>
<dbReference type="Gene3D" id="3.30.40.10">
    <property type="entry name" value="Zinc/RING finger domain, C3HC4 (zinc finger)"/>
    <property type="match status" value="1"/>
</dbReference>
<dbReference type="InterPro" id="IPR015877">
    <property type="entry name" value="Cdk-activating_kinase_MAT1_cen"/>
</dbReference>
<dbReference type="InterPro" id="IPR004575">
    <property type="entry name" value="MAT1/Tfb3"/>
</dbReference>
<dbReference type="InterPro" id="IPR001841">
    <property type="entry name" value="Znf_RING"/>
</dbReference>
<dbReference type="InterPro" id="IPR013083">
    <property type="entry name" value="Znf_RING/FYVE/PHD"/>
</dbReference>
<dbReference type="InterPro" id="IPR017907">
    <property type="entry name" value="Znf_RING_CS"/>
</dbReference>
<dbReference type="NCBIfam" id="TIGR00570">
    <property type="entry name" value="cdk7"/>
    <property type="match status" value="1"/>
</dbReference>
<dbReference type="PANTHER" id="PTHR12683">
    <property type="entry name" value="CDK-ACTIVATING KINASE ASSEMBLY FACTOR MAT1"/>
    <property type="match status" value="1"/>
</dbReference>
<dbReference type="PANTHER" id="PTHR12683:SF13">
    <property type="entry name" value="CDK-ACTIVATING KINASE ASSEMBLY FACTOR MAT1"/>
    <property type="match status" value="1"/>
</dbReference>
<dbReference type="Pfam" id="PF06391">
    <property type="entry name" value="MAT1"/>
    <property type="match status" value="1"/>
</dbReference>
<dbReference type="Pfam" id="PF17121">
    <property type="entry name" value="zf-C3HC4_5"/>
    <property type="match status" value="1"/>
</dbReference>
<dbReference type="SUPFAM" id="SSF57850">
    <property type="entry name" value="RING/U-box"/>
    <property type="match status" value="1"/>
</dbReference>
<dbReference type="PROSITE" id="PS00518">
    <property type="entry name" value="ZF_RING_1"/>
    <property type="match status" value="1"/>
</dbReference>
<dbReference type="PROSITE" id="PS50089">
    <property type="entry name" value="ZF_RING_2"/>
    <property type="match status" value="1"/>
</dbReference>
<protein>
    <recommendedName>
        <fullName>RNA polymerase II transcription factor B subunit 3</fullName>
    </recommendedName>
    <alternativeName>
        <fullName>RNA polymerase II transcription factor B 38 kDa subunit</fullName>
    </alternativeName>
    <alternativeName>
        <fullName>RNA polymerase II transcription factor B p38 subunit</fullName>
    </alternativeName>
</protein>
<organism>
    <name type="scientific">Debaryomyces hansenii (strain ATCC 36239 / CBS 767 / BCRC 21394 / JCM 1990 / NBRC 0083 / IGC 2968)</name>
    <name type="common">Yeast</name>
    <name type="synonym">Torulaspora hansenii</name>
    <dbReference type="NCBI Taxonomy" id="284592"/>
    <lineage>
        <taxon>Eukaryota</taxon>
        <taxon>Fungi</taxon>
        <taxon>Dikarya</taxon>
        <taxon>Ascomycota</taxon>
        <taxon>Saccharomycotina</taxon>
        <taxon>Pichiomycetes</taxon>
        <taxon>Debaryomycetaceae</taxon>
        <taxon>Debaryomyces</taxon>
    </lineage>
</organism>